<name>SKIL_HUMAN</name>
<comment type="function">
    <text>May have regulatory role in cell division or differentiation in response to extracellular signals.</text>
</comment>
<comment type="subunit">
    <text evidence="1 4 6">Interacts with CPNE4 (via VWFA domain) (By similarity). Interacts with SMAD2, SMAD3 and RNF111 (PubMed:17591695). Isoform 1 interacts with WWP1 (PubMed:15221015).</text>
</comment>
<comment type="interaction">
    <interactant intactId="EBI-2902468">
        <id>P12757</id>
    </interactant>
    <interactant intactId="EBI-948169">
        <id>P13637</id>
        <label>ATP1A3</label>
    </interactant>
    <organismsDiffer>false</organismsDiffer>
    <experiments>3</experiments>
</comment>
<comment type="interaction">
    <interactant intactId="EBI-2902468">
        <id>P12757</id>
    </interactant>
    <interactant intactId="EBI-748597">
        <id>Q05D60</id>
        <label>DEUP1</label>
    </interactant>
    <organismsDiffer>false</organismsDiffer>
    <experiments>3</experiments>
</comment>
<comment type="interaction">
    <interactant intactId="EBI-2902468">
        <id>P12757</id>
    </interactant>
    <interactant intactId="EBI-719554">
        <id>Q9Y295</id>
        <label>DRG1</label>
    </interactant>
    <organismsDiffer>false</organismsDiffer>
    <experiments>3</experiments>
</comment>
<comment type="interaction">
    <interactant intactId="EBI-2902468">
        <id>P12757</id>
    </interactant>
    <interactant intactId="EBI-1052570">
        <id>O95995</id>
        <label>GAS8</label>
    </interactant>
    <organismsDiffer>false</organismsDiffer>
    <experiments>3</experiments>
</comment>
<comment type="interaction">
    <interactant intactId="EBI-2902468">
        <id>P12757</id>
    </interactant>
    <interactant intactId="EBI-10975473">
        <id>O60333-2</id>
        <label>KIF1B</label>
    </interactant>
    <organismsDiffer>false</organismsDiffer>
    <experiments>3</experiments>
</comment>
<comment type="interaction">
    <interactant intactId="EBI-2902468">
        <id>P12757</id>
    </interactant>
    <interactant intactId="EBI-475646">
        <id>P07196</id>
        <label>NEFL</label>
    </interactant>
    <organismsDiffer>false</organismsDiffer>
    <experiments>6</experiments>
</comment>
<comment type="interaction">
    <interactant intactId="EBI-2902468">
        <id>P12757</id>
    </interactant>
    <interactant intactId="EBI-750038">
        <id>Q9H4D5</id>
        <label>NXF3</label>
    </interactant>
    <organismsDiffer>false</organismsDiffer>
    <experiments>3</experiments>
</comment>
<comment type="interaction">
    <interactant intactId="EBI-2902468">
        <id>P12757</id>
    </interactant>
    <interactant intactId="EBI-536879">
        <id>O43482</id>
        <label>OIP5</label>
    </interactant>
    <organismsDiffer>false</organismsDiffer>
    <experiments>3</experiments>
</comment>
<comment type="interaction">
    <interactant intactId="EBI-2902468">
        <id>P12757</id>
    </interactant>
    <interactant intactId="EBI-716404">
        <id>P16284</id>
        <label>PECAM1</label>
    </interactant>
    <organismsDiffer>false</organismsDiffer>
    <experiments>3</experiments>
</comment>
<comment type="interaction">
    <interactant intactId="EBI-2902468">
        <id>P12757</id>
    </interactant>
    <interactant intactId="EBI-1040141">
        <id>Q15796</id>
        <label>SMAD2</label>
    </interactant>
    <organismsDiffer>false</organismsDiffer>
    <experiments>3</experiments>
</comment>
<comment type="interaction">
    <interactant intactId="EBI-2902468">
        <id>P12757</id>
    </interactant>
    <interactant intactId="EBI-347263">
        <id>Q13485</id>
        <label>SMAD4</label>
    </interactant>
    <organismsDiffer>false</organismsDiffer>
    <experiments>5</experiments>
</comment>
<comment type="interaction">
    <interactant intactId="EBI-2902468">
        <id>P12757</id>
    </interactant>
    <interactant intactId="EBI-749970">
        <id>Q53HV7</id>
        <label>SMUG1</label>
    </interactant>
    <organismsDiffer>false</organismsDiffer>
    <experiments>3</experiments>
</comment>
<comment type="interaction">
    <interactant intactId="EBI-2902468">
        <id>P12757</id>
    </interactant>
    <interactant intactId="EBI-5235340">
        <id>Q7Z699</id>
        <label>SPRED1</label>
    </interactant>
    <organismsDiffer>false</organismsDiffer>
    <experiments>3</experiments>
</comment>
<comment type="interaction">
    <interactant intactId="EBI-2902468">
        <id>P12757</id>
    </interactant>
    <interactant intactId="EBI-749295">
        <id>O75716</id>
        <label>STK16</label>
    </interactant>
    <organismsDiffer>false</organismsDiffer>
    <experiments>3</experiments>
</comment>
<comment type="interaction">
    <interactant intactId="EBI-2902468">
        <id>P12757</id>
    </interactant>
    <interactant intactId="EBI-717810">
        <id>Q08117</id>
        <label>TLE5</label>
    </interactant>
    <organismsDiffer>false</organismsDiffer>
    <experiments>3</experiments>
</comment>
<comment type="interaction">
    <interactant intactId="EBI-2902468">
        <id>P12757</id>
    </interactant>
    <interactant intactId="EBI-353844">
        <id>P08670</id>
        <label>VIM</label>
    </interactant>
    <organismsDiffer>false</organismsDiffer>
    <experiments>3</experiments>
</comment>
<comment type="interaction">
    <interactant intactId="EBI-2902468">
        <id>P12757</id>
    </interactant>
    <interactant intactId="EBI-10243107">
        <id>Q548N1</id>
        <label>VPS28</label>
    </interactant>
    <organismsDiffer>false</organismsDiffer>
    <experiments>3</experiments>
</comment>
<comment type="interaction">
    <interactant intactId="EBI-2902468">
        <id>P12757</id>
    </interactant>
    <interactant intactId="EBI-727424">
        <id>Q9UK41</id>
        <label>VPS28</label>
    </interactant>
    <organismsDiffer>false</organismsDiffer>
    <experiments>4</experiments>
</comment>
<comment type="interaction">
    <interactant intactId="EBI-2902468">
        <id>P12757</id>
    </interactant>
    <interactant intactId="EBI-720609">
        <id>O76024</id>
        <label>WFS1</label>
    </interactant>
    <organismsDiffer>false</organismsDiffer>
    <experiments>3</experiments>
</comment>
<comment type="interaction">
    <interactant intactId="EBI-2902468">
        <id>P12757</id>
    </interactant>
    <interactant intactId="EBI-295222">
        <id>P23025</id>
        <label>XPA</label>
    </interactant>
    <organismsDiffer>false</organismsDiffer>
    <experiments>3</experiments>
</comment>
<comment type="interaction">
    <interactant intactId="EBI-2902468">
        <id>P12757</id>
    </interactant>
    <interactant intactId="EBI-349004">
        <id>Q60974</id>
        <label>Ncor1</label>
    </interactant>
    <organismsDiffer>true</organismsDiffer>
    <experiments>2</experiments>
</comment>
<comment type="alternative products">
    <event type="alternative splicing"/>
    <isoform>
        <id>P12757-1</id>
        <name>SNON</name>
        <sequence type="displayed"/>
    </isoform>
    <isoform>
        <id>P12757-2</id>
        <name>SNOA</name>
        <sequence type="described" ref="VSP_004392 VSP_004394"/>
    </isoform>
    <isoform>
        <id>P12757-3</id>
        <name>SNON2</name>
        <sequence type="described" ref="VSP_004395 VSP_004396"/>
    </isoform>
    <isoform>
        <id>P12757-4</id>
        <name>SNOI</name>
        <sequence type="described" ref="VSP_004393"/>
    </isoform>
    <isoform>
        <id>P12757-5</id>
        <name>5</name>
        <sequence type="described" ref="VSP_040099"/>
    </isoform>
</comment>
<comment type="tissue specificity">
    <text evidence="8">Isoform SNON and isoform SNOA are widely expressed. Highest expression is found in skeletal muscle, followed by placenta and lung. Lowest expression in heart, brain and pancreas. Isoform SNOI expression is restricted to skeletal muscle.</text>
</comment>
<comment type="PTM">
    <text evidence="6">Ubiquitinated by RNF111 and ARK2C, promoting proteasomal degradation, leading to enhance the BMP-Smad signaling.</text>
</comment>
<comment type="similarity">
    <text evidence="14">Belongs to the SKI family.</text>
</comment>
<gene>
    <name type="primary">SKIL</name>
    <name type="synonym">SNO</name>
</gene>
<protein>
    <recommendedName>
        <fullName>Ski-like protein</fullName>
    </recommendedName>
    <alternativeName>
        <fullName>Ski-related oncogene</fullName>
    </alternativeName>
    <alternativeName>
        <fullName>Ski-related protein</fullName>
    </alternativeName>
</protein>
<dbReference type="EMBL" id="X15219">
    <property type="protein sequence ID" value="CAA33289.1"/>
    <property type="molecule type" value="mRNA"/>
</dbReference>
<dbReference type="EMBL" id="X15217">
    <property type="protein sequence ID" value="CAA33287.1"/>
    <property type="molecule type" value="mRNA"/>
</dbReference>
<dbReference type="EMBL" id="U70730">
    <property type="protein sequence ID" value="AAB65850.1"/>
    <property type="molecule type" value="mRNA"/>
</dbReference>
<dbReference type="EMBL" id="AK300053">
    <property type="protein sequence ID" value="BAG61862.1"/>
    <property type="molecule type" value="mRNA"/>
</dbReference>
<dbReference type="EMBL" id="AC073288">
    <property type="status" value="NOT_ANNOTATED_CDS"/>
    <property type="molecule type" value="Genomic_DNA"/>
</dbReference>
<dbReference type="EMBL" id="BC059386">
    <property type="protein sequence ID" value="AAH59386.1"/>
    <property type="molecule type" value="mRNA"/>
</dbReference>
<dbReference type="EMBL" id="Z19588">
    <property type="protein sequence ID" value="CAA79636.1"/>
    <property type="molecule type" value="mRNA"/>
</dbReference>
<dbReference type="CCDS" id="CCDS33890.1">
    <molecule id="P12757-1"/>
</dbReference>
<dbReference type="CCDS" id="CCDS46953.1">
    <molecule id="P12757-3"/>
</dbReference>
<dbReference type="CCDS" id="CCDS46954.1">
    <molecule id="P12757-5"/>
</dbReference>
<dbReference type="PIR" id="S06052">
    <property type="entry name" value="TVHUSN"/>
</dbReference>
<dbReference type="PIR" id="S06054">
    <property type="entry name" value="TVHUSA"/>
</dbReference>
<dbReference type="RefSeq" id="NP_001138569.1">
    <molecule id="P12757-3"/>
    <property type="nucleotide sequence ID" value="NM_001145097.2"/>
</dbReference>
<dbReference type="RefSeq" id="NP_001138570.1">
    <molecule id="P12757-5"/>
    <property type="nucleotide sequence ID" value="NM_001145098.3"/>
</dbReference>
<dbReference type="RefSeq" id="NP_001234937.1">
    <molecule id="P12757-1"/>
    <property type="nucleotide sequence ID" value="NM_001248008.1"/>
</dbReference>
<dbReference type="RefSeq" id="NP_005405.2">
    <molecule id="P12757-1"/>
    <property type="nucleotide sequence ID" value="NM_005414.5"/>
</dbReference>
<dbReference type="RefSeq" id="XP_005247778.1">
    <molecule id="P12757-1"/>
    <property type="nucleotide sequence ID" value="XM_005247721.2"/>
</dbReference>
<dbReference type="RefSeq" id="XP_006713798.1">
    <molecule id="P12757-1"/>
    <property type="nucleotide sequence ID" value="XM_006713735.2"/>
</dbReference>
<dbReference type="PDB" id="3EQ5">
    <property type="method" value="X-ray"/>
    <property type="resolution" value="2.45 A"/>
    <property type="chains" value="A/B/C/D/E/F/G/H/I/J/K/L=137-238"/>
</dbReference>
<dbReference type="PDB" id="5C4V">
    <property type="method" value="X-ray"/>
    <property type="resolution" value="2.60 A"/>
    <property type="chains" value="B/D/F=238-356"/>
</dbReference>
<dbReference type="PDBsum" id="3EQ5"/>
<dbReference type="PDBsum" id="5C4V"/>
<dbReference type="SMR" id="P12757"/>
<dbReference type="BioGRID" id="112389">
    <property type="interactions" value="111"/>
</dbReference>
<dbReference type="CORUM" id="P12757"/>
<dbReference type="DIP" id="DIP-42138N"/>
<dbReference type="FunCoup" id="P12757">
    <property type="interactions" value="1808"/>
</dbReference>
<dbReference type="IntAct" id="P12757">
    <property type="interactions" value="100"/>
</dbReference>
<dbReference type="MINT" id="P12757"/>
<dbReference type="STRING" id="9606.ENSP00000415243"/>
<dbReference type="GlyGen" id="P12757">
    <property type="glycosylation" value="3 sites, 1 O-linked glycan (3 sites)"/>
</dbReference>
<dbReference type="iPTMnet" id="P12757"/>
<dbReference type="PhosphoSitePlus" id="P12757"/>
<dbReference type="BioMuta" id="SKIL"/>
<dbReference type="DMDM" id="313104010"/>
<dbReference type="jPOST" id="P12757"/>
<dbReference type="MassIVE" id="P12757"/>
<dbReference type="PaxDb" id="9606-ENSP00000415243"/>
<dbReference type="PeptideAtlas" id="P12757"/>
<dbReference type="ProteomicsDB" id="52866">
    <molecule id="P12757-1"/>
</dbReference>
<dbReference type="ProteomicsDB" id="52867">
    <molecule id="P12757-2"/>
</dbReference>
<dbReference type="ProteomicsDB" id="52868">
    <molecule id="P12757-3"/>
</dbReference>
<dbReference type="ProteomicsDB" id="52869">
    <molecule id="P12757-4"/>
</dbReference>
<dbReference type="ProteomicsDB" id="52870">
    <molecule id="P12757-5"/>
</dbReference>
<dbReference type="Pumba" id="P12757"/>
<dbReference type="Antibodypedia" id="1923">
    <property type="antibodies" value="552 antibodies from 37 providers"/>
</dbReference>
<dbReference type="DNASU" id="6498"/>
<dbReference type="Ensembl" id="ENST00000259119.9">
    <molecule id="P12757-1"/>
    <property type="protein sequence ID" value="ENSP00000259119.4"/>
    <property type="gene ID" value="ENSG00000136603.15"/>
</dbReference>
<dbReference type="Ensembl" id="ENST00000413427.6">
    <molecule id="P12757-3"/>
    <property type="protein sequence ID" value="ENSP00000400193.2"/>
    <property type="gene ID" value="ENSG00000136603.15"/>
</dbReference>
<dbReference type="Ensembl" id="ENST00000426052.6">
    <molecule id="P12757-5"/>
    <property type="protein sequence ID" value="ENSP00000406520.2"/>
    <property type="gene ID" value="ENSG00000136603.15"/>
</dbReference>
<dbReference type="Ensembl" id="ENST00000458537.7">
    <molecule id="P12757-1"/>
    <property type="protein sequence ID" value="ENSP00000415243.3"/>
    <property type="gene ID" value="ENSG00000136603.15"/>
</dbReference>
<dbReference type="Ensembl" id="ENST00000465590.2">
    <molecule id="P12757-1"/>
    <property type="protein sequence ID" value="ENSP00000516712.1"/>
    <property type="gene ID" value="ENSG00000136603.15"/>
</dbReference>
<dbReference type="GeneID" id="6498"/>
<dbReference type="KEGG" id="hsa:6498"/>
<dbReference type="MANE-Select" id="ENST00000259119.9">
    <property type="protein sequence ID" value="ENSP00000259119.4"/>
    <property type="RefSeq nucleotide sequence ID" value="NM_005414.5"/>
    <property type="RefSeq protein sequence ID" value="NP_005405.2"/>
</dbReference>
<dbReference type="UCSC" id="uc003fgu.4">
    <molecule id="P12757-1"/>
    <property type="organism name" value="human"/>
</dbReference>
<dbReference type="AGR" id="HGNC:10897"/>
<dbReference type="CTD" id="6498"/>
<dbReference type="DisGeNET" id="6498"/>
<dbReference type="GeneCards" id="SKIL"/>
<dbReference type="HGNC" id="HGNC:10897">
    <property type="gene designation" value="SKIL"/>
</dbReference>
<dbReference type="HPA" id="ENSG00000136603">
    <property type="expression patterns" value="Low tissue specificity"/>
</dbReference>
<dbReference type="MalaCards" id="SKIL"/>
<dbReference type="MIM" id="165340">
    <property type="type" value="gene"/>
</dbReference>
<dbReference type="neXtProt" id="NX_P12757"/>
<dbReference type="OpenTargets" id="ENSG00000136603"/>
<dbReference type="PharmGKB" id="PA35797"/>
<dbReference type="VEuPathDB" id="HostDB:ENSG00000136603"/>
<dbReference type="eggNOG" id="ENOG502QT5P">
    <property type="taxonomic scope" value="Eukaryota"/>
</dbReference>
<dbReference type="GeneTree" id="ENSGT00940000158435"/>
<dbReference type="HOGENOM" id="CLU_025786_0_0_1"/>
<dbReference type="InParanoid" id="P12757"/>
<dbReference type="OMA" id="HAHRMEE"/>
<dbReference type="OrthoDB" id="3938623at2759"/>
<dbReference type="PAN-GO" id="P12757">
    <property type="GO annotations" value="8 GO annotations based on evolutionary models"/>
</dbReference>
<dbReference type="PhylomeDB" id="P12757"/>
<dbReference type="TreeFam" id="TF324133"/>
<dbReference type="PathwayCommons" id="P12757"/>
<dbReference type="Reactome" id="R-HSA-2173795">
    <property type="pathway name" value="Downregulation of SMAD2/3:SMAD4 transcriptional activity"/>
</dbReference>
<dbReference type="SignaLink" id="P12757"/>
<dbReference type="SIGNOR" id="P12757"/>
<dbReference type="BioGRID-ORCS" id="6498">
    <property type="hits" value="20 hits in 1157 CRISPR screens"/>
</dbReference>
<dbReference type="ChiTaRS" id="SKIL">
    <property type="organism name" value="human"/>
</dbReference>
<dbReference type="EvolutionaryTrace" id="P12757"/>
<dbReference type="GeneWiki" id="SKIL"/>
<dbReference type="GenomeRNAi" id="6498"/>
<dbReference type="Pharos" id="P12757">
    <property type="development level" value="Tbio"/>
</dbReference>
<dbReference type="PRO" id="PR:P12757"/>
<dbReference type="Proteomes" id="UP000005640">
    <property type="component" value="Chromosome 3"/>
</dbReference>
<dbReference type="RNAct" id="P12757">
    <property type="molecule type" value="protein"/>
</dbReference>
<dbReference type="Bgee" id="ENSG00000136603">
    <property type="expression patterns" value="Expressed in tendon of biceps brachii and 193 other cell types or tissues"/>
</dbReference>
<dbReference type="ExpressionAtlas" id="P12757">
    <property type="expression patterns" value="baseline and differential"/>
</dbReference>
<dbReference type="GO" id="GO:0001669">
    <property type="term" value="C:acrosomal vesicle"/>
    <property type="evidence" value="ECO:0007669"/>
    <property type="project" value="Ensembl"/>
</dbReference>
<dbReference type="GO" id="GO:0005737">
    <property type="term" value="C:cytoplasm"/>
    <property type="evidence" value="ECO:0000314"/>
    <property type="project" value="UniProtKB"/>
</dbReference>
<dbReference type="GO" id="GO:0005654">
    <property type="term" value="C:nucleoplasm"/>
    <property type="evidence" value="ECO:0000304"/>
    <property type="project" value="Reactome"/>
</dbReference>
<dbReference type="GO" id="GO:0005634">
    <property type="term" value="C:nucleus"/>
    <property type="evidence" value="ECO:0000314"/>
    <property type="project" value="UniProtKB"/>
</dbReference>
<dbReference type="GO" id="GO:0016605">
    <property type="term" value="C:PML body"/>
    <property type="evidence" value="ECO:0000314"/>
    <property type="project" value="UniProtKB"/>
</dbReference>
<dbReference type="GO" id="GO:0032991">
    <property type="term" value="C:protein-containing complex"/>
    <property type="evidence" value="ECO:0000314"/>
    <property type="project" value="MGI"/>
</dbReference>
<dbReference type="GO" id="GO:0005667">
    <property type="term" value="C:transcription regulator complex"/>
    <property type="evidence" value="ECO:0000318"/>
    <property type="project" value="GO_Central"/>
</dbReference>
<dbReference type="GO" id="GO:0003682">
    <property type="term" value="F:chromatin binding"/>
    <property type="evidence" value="ECO:0007669"/>
    <property type="project" value="Ensembl"/>
</dbReference>
<dbReference type="GO" id="GO:0000981">
    <property type="term" value="F:DNA-binding transcription factor activity, RNA polymerase II-specific"/>
    <property type="evidence" value="ECO:0000318"/>
    <property type="project" value="GO_Central"/>
</dbReference>
<dbReference type="GO" id="GO:0001227">
    <property type="term" value="F:DNA-binding transcription repressor activity, RNA polymerase II-specific"/>
    <property type="evidence" value="ECO:0000314"/>
    <property type="project" value="NTNU_SB"/>
</dbReference>
<dbReference type="GO" id="GO:0042802">
    <property type="term" value="F:identical protein binding"/>
    <property type="evidence" value="ECO:0000353"/>
    <property type="project" value="UniProtKB"/>
</dbReference>
<dbReference type="GO" id="GO:0019904">
    <property type="term" value="F:protein domain specific binding"/>
    <property type="evidence" value="ECO:0000353"/>
    <property type="project" value="UniProtKB"/>
</dbReference>
<dbReference type="GO" id="GO:0044877">
    <property type="term" value="F:protein-containing complex binding"/>
    <property type="evidence" value="ECO:0000314"/>
    <property type="project" value="UniProtKB"/>
</dbReference>
<dbReference type="GO" id="GO:0000978">
    <property type="term" value="F:RNA polymerase II cis-regulatory region sequence-specific DNA binding"/>
    <property type="evidence" value="ECO:0000314"/>
    <property type="project" value="NTNU_SB"/>
</dbReference>
<dbReference type="GO" id="GO:0046332">
    <property type="term" value="F:SMAD binding"/>
    <property type="evidence" value="ECO:0000353"/>
    <property type="project" value="UniProtKB"/>
</dbReference>
<dbReference type="GO" id="GO:0001825">
    <property type="term" value="P:blastocyst formation"/>
    <property type="evidence" value="ECO:0007669"/>
    <property type="project" value="Ensembl"/>
</dbReference>
<dbReference type="GO" id="GO:0008625">
    <property type="term" value="P:extrinsic apoptotic signaling pathway via death domain receptors"/>
    <property type="evidence" value="ECO:0007669"/>
    <property type="project" value="Ensembl"/>
</dbReference>
<dbReference type="GO" id="GO:0008630">
    <property type="term" value="P:intrinsic apoptotic signaling pathway in response to DNA damage"/>
    <property type="evidence" value="ECO:0007669"/>
    <property type="project" value="Ensembl"/>
</dbReference>
<dbReference type="GO" id="GO:0070306">
    <property type="term" value="P:lens fiber cell differentiation"/>
    <property type="evidence" value="ECO:0007669"/>
    <property type="project" value="Ensembl"/>
</dbReference>
<dbReference type="GO" id="GO:0002260">
    <property type="term" value="P:lymphocyte homeostasis"/>
    <property type="evidence" value="ECO:0007669"/>
    <property type="project" value="Ensembl"/>
</dbReference>
<dbReference type="GO" id="GO:0030514">
    <property type="term" value="P:negative regulation of BMP signaling pathway"/>
    <property type="evidence" value="ECO:0000318"/>
    <property type="project" value="GO_Central"/>
</dbReference>
<dbReference type="GO" id="GO:0045596">
    <property type="term" value="P:negative regulation of cell differentiation"/>
    <property type="evidence" value="ECO:0007669"/>
    <property type="project" value="Ensembl"/>
</dbReference>
<dbReference type="GO" id="GO:0000122">
    <property type="term" value="P:negative regulation of transcription by RNA polymerase II"/>
    <property type="evidence" value="ECO:0000314"/>
    <property type="project" value="UniProtKB"/>
</dbReference>
<dbReference type="GO" id="GO:0030512">
    <property type="term" value="P:negative regulation of transforming growth factor beta receptor signaling pathway"/>
    <property type="evidence" value="ECO:0000314"/>
    <property type="project" value="UniProtKB"/>
</dbReference>
<dbReference type="GO" id="GO:0050772">
    <property type="term" value="P:positive regulation of axonogenesis"/>
    <property type="evidence" value="ECO:0000315"/>
    <property type="project" value="UniProtKB"/>
</dbReference>
<dbReference type="GO" id="GO:1902043">
    <property type="term" value="P:positive regulation of extrinsic apoptotic signaling pathway via death domain receptors"/>
    <property type="evidence" value="ECO:0007669"/>
    <property type="project" value="Ensembl"/>
</dbReference>
<dbReference type="GO" id="GO:1902231">
    <property type="term" value="P:positive regulation of intrinsic apoptotic signaling pathway in response to DNA damage"/>
    <property type="evidence" value="ECO:0007669"/>
    <property type="project" value="Ensembl"/>
</dbReference>
<dbReference type="GO" id="GO:0051726">
    <property type="term" value="P:regulation of cell cycle"/>
    <property type="evidence" value="ECO:0007669"/>
    <property type="project" value="Ensembl"/>
</dbReference>
<dbReference type="GO" id="GO:0046677">
    <property type="term" value="P:response to antibiotic"/>
    <property type="evidence" value="ECO:0000270"/>
    <property type="project" value="UniProtKB"/>
</dbReference>
<dbReference type="GO" id="GO:0034097">
    <property type="term" value="P:response to cytokine"/>
    <property type="evidence" value="ECO:0007669"/>
    <property type="project" value="Ensembl"/>
</dbReference>
<dbReference type="GO" id="GO:0070848">
    <property type="term" value="P:response to growth factor"/>
    <property type="evidence" value="ECO:0000314"/>
    <property type="project" value="UniProtKB"/>
</dbReference>
<dbReference type="GO" id="GO:0007519">
    <property type="term" value="P:skeletal muscle tissue development"/>
    <property type="evidence" value="ECO:0000314"/>
    <property type="project" value="UniProtKB"/>
</dbReference>
<dbReference type="GO" id="GO:0007283">
    <property type="term" value="P:spermatogenesis"/>
    <property type="evidence" value="ECO:0007669"/>
    <property type="project" value="Ensembl"/>
</dbReference>
<dbReference type="GO" id="GO:0007179">
    <property type="term" value="P:transforming growth factor beta receptor signaling pathway"/>
    <property type="evidence" value="ECO:0007669"/>
    <property type="project" value="Ensembl"/>
</dbReference>
<dbReference type="CDD" id="cd21084">
    <property type="entry name" value="DHD_Sno"/>
    <property type="match status" value="1"/>
</dbReference>
<dbReference type="FunFam" id="3.10.390.10:FF:000002">
    <property type="entry name" value="Putative ski oncogene"/>
    <property type="match status" value="1"/>
</dbReference>
<dbReference type="FunFam" id="3.10.260.20:FF:000002">
    <property type="entry name" value="SKI-like oncogene a"/>
    <property type="match status" value="1"/>
</dbReference>
<dbReference type="Gene3D" id="3.10.390.10">
    <property type="entry name" value="SAND domain-like"/>
    <property type="match status" value="1"/>
</dbReference>
<dbReference type="Gene3D" id="3.10.260.20">
    <property type="entry name" value="Ski"/>
    <property type="match status" value="1"/>
</dbReference>
<dbReference type="InterPro" id="IPR014890">
    <property type="entry name" value="c-SKI_SMAD4-bd_dom"/>
</dbReference>
<dbReference type="InterPro" id="IPR009061">
    <property type="entry name" value="DNA-bd_dom_put_sf"/>
</dbReference>
<dbReference type="InterPro" id="IPR010919">
    <property type="entry name" value="SAND-like_dom_sf"/>
</dbReference>
<dbReference type="InterPro" id="IPR003380">
    <property type="entry name" value="SKI/SNO/DAC"/>
</dbReference>
<dbReference type="InterPro" id="IPR037000">
    <property type="entry name" value="Ski_DNA-bd_sf"/>
</dbReference>
<dbReference type="InterPro" id="IPR023216">
    <property type="entry name" value="Tscrpt_reg_SKI_SnoN"/>
</dbReference>
<dbReference type="PANTHER" id="PTHR10005">
    <property type="entry name" value="SKI ONCOGENE-RELATED"/>
    <property type="match status" value="1"/>
</dbReference>
<dbReference type="PANTHER" id="PTHR10005:SF3">
    <property type="entry name" value="SKI-LIKE PROTEIN"/>
    <property type="match status" value="1"/>
</dbReference>
<dbReference type="Pfam" id="PF08782">
    <property type="entry name" value="c-SKI_SMAD_bind"/>
    <property type="match status" value="1"/>
</dbReference>
<dbReference type="Pfam" id="PF02437">
    <property type="entry name" value="Ski_Sno_DHD"/>
    <property type="match status" value="1"/>
</dbReference>
<dbReference type="SMART" id="SM01046">
    <property type="entry name" value="c-SKI_SMAD_bind"/>
    <property type="match status" value="1"/>
</dbReference>
<dbReference type="SUPFAM" id="SSF46955">
    <property type="entry name" value="Putative DNA-binding domain"/>
    <property type="match status" value="1"/>
</dbReference>
<dbReference type="SUPFAM" id="SSF63763">
    <property type="entry name" value="SAND domain-like"/>
    <property type="match status" value="1"/>
</dbReference>
<proteinExistence type="evidence at protein level"/>
<organism>
    <name type="scientific">Homo sapiens</name>
    <name type="common">Human</name>
    <dbReference type="NCBI Taxonomy" id="9606"/>
    <lineage>
        <taxon>Eukaryota</taxon>
        <taxon>Metazoa</taxon>
        <taxon>Chordata</taxon>
        <taxon>Craniata</taxon>
        <taxon>Vertebrata</taxon>
        <taxon>Euteleostomi</taxon>
        <taxon>Mammalia</taxon>
        <taxon>Eutheria</taxon>
        <taxon>Euarchontoglires</taxon>
        <taxon>Primates</taxon>
        <taxon>Haplorrhini</taxon>
        <taxon>Catarrhini</taxon>
        <taxon>Hominidae</taxon>
        <taxon>Homo</taxon>
    </lineage>
</organism>
<accession>P12757</accession>
<accession>A6NGT1</accession>
<accession>B4DT50</accession>
<accession>O00464</accession>
<accession>P12756</accession>
<accession>Q07501</accession>
<sequence length="684" mass="76976">MENLQTNFSLVQGSTKKLNGMGDDGSPPAKKMITDIHANGKTINKVPTVKKEHLDDYGEAPVETDGEHVKRTCTSVPETLHLNPSLKHTLAQFHLSSQSSLGGPAAFSARHSQESMSPTVFLPLPSPQVLPGPLLIPSDSSTELTQTVLEGESISCFQVGGEKRLCLPQVLNSVLREFTLQQINTVCDELYIYCSRCTSDQLHILKVLGILPFNAPSCGLITLTDAQRLCNALLRPRTFPQNGSVLPAKSSLAQLKETGSAFEVEHECLGKCQGLFAPQFYVQPDAPCIQCLECCGMFAPQTFVMHSHRSPDKRTCHWGFESAKWHCYLHVNQKYLGTPEEKKLKIILEEMKEKFSMRSGKRNQSKTDAPSGMELQSWYPVIKQEGDHVSQTHSFLHPSYYLYMCDKVVAPNVSLTSAVSQSKELTKTEASKSISRQSEKAHSSGKLQKTVSYPDVSLEEQEKMDLKTSRELCSRLDASISNNSTSKRKSESATCNLVRDINKVGIGLVAAASSPLLVKDVICEDDKGKIMEEVMRTYLKQQEKLNLILQKKQQLQMEVKMLSSSKSMKELTEEQQNLQKELESLQNEHAQRMEEFYVEQKDLEKKLEQIMKQKCTCDSNLEKDKEAEYAGQLAELRQRLDHAEADRQELQDELRQEREARQKLEMMIKELKLQILKSSKTAKE</sequence>
<reference key="1">
    <citation type="journal article" date="1989" name="Nucleic Acids Res.">
        <title>Isolation of human cDNA clones of ski and the ski-related gene, sno.</title>
        <authorList>
            <person name="Nomura N."/>
            <person name="Sasamoto S."/>
            <person name="Ishii S."/>
            <person name="Date T."/>
            <person name="Matsui M."/>
            <person name="Ishizaki R."/>
        </authorList>
    </citation>
    <scope>NUCLEOTIDE SEQUENCE [MRNA] (ISOFORMS SNON AND SNOA)</scope>
    <scope>VARIANT VAL-38</scope>
    <source>
        <tissue>Umbilical vein endothelial cell</tissue>
    </source>
</reference>
<reference key="2">
    <citation type="journal article" date="1997" name="Nucleic Acids Res.">
        <title>Proto-oncogene Sno expression, alternative isoforms and immediate early serum response.</title>
        <authorList>
            <person name="Pearson-White S.H."/>
            <person name="Crittenden R."/>
        </authorList>
    </citation>
    <scope>NUCLEOTIDE SEQUENCE [MRNA] (ISOFORM SNON2)</scope>
    <scope>VARIANT VAL-38</scope>
    <source>
        <tissue>Kidney</tissue>
    </source>
</reference>
<reference key="3">
    <citation type="journal article" date="2004" name="Nat. Genet.">
        <title>Complete sequencing and characterization of 21,243 full-length human cDNAs.</title>
        <authorList>
            <person name="Ota T."/>
            <person name="Suzuki Y."/>
            <person name="Nishikawa T."/>
            <person name="Otsuki T."/>
            <person name="Sugiyama T."/>
            <person name="Irie R."/>
            <person name="Wakamatsu A."/>
            <person name="Hayashi K."/>
            <person name="Sato H."/>
            <person name="Nagai K."/>
            <person name="Kimura K."/>
            <person name="Makita H."/>
            <person name="Sekine M."/>
            <person name="Obayashi M."/>
            <person name="Nishi T."/>
            <person name="Shibahara T."/>
            <person name="Tanaka T."/>
            <person name="Ishii S."/>
            <person name="Yamamoto J."/>
            <person name="Saito K."/>
            <person name="Kawai Y."/>
            <person name="Isono Y."/>
            <person name="Nakamura Y."/>
            <person name="Nagahari K."/>
            <person name="Murakami K."/>
            <person name="Yasuda T."/>
            <person name="Iwayanagi T."/>
            <person name="Wagatsuma M."/>
            <person name="Shiratori A."/>
            <person name="Sudo H."/>
            <person name="Hosoiri T."/>
            <person name="Kaku Y."/>
            <person name="Kodaira H."/>
            <person name="Kondo H."/>
            <person name="Sugawara M."/>
            <person name="Takahashi M."/>
            <person name="Kanda K."/>
            <person name="Yokoi T."/>
            <person name="Furuya T."/>
            <person name="Kikkawa E."/>
            <person name="Omura Y."/>
            <person name="Abe K."/>
            <person name="Kamihara K."/>
            <person name="Katsuta N."/>
            <person name="Sato K."/>
            <person name="Tanikawa M."/>
            <person name="Yamazaki M."/>
            <person name="Ninomiya K."/>
            <person name="Ishibashi T."/>
            <person name="Yamashita H."/>
            <person name="Murakawa K."/>
            <person name="Fujimori K."/>
            <person name="Tanai H."/>
            <person name="Kimata M."/>
            <person name="Watanabe M."/>
            <person name="Hiraoka S."/>
            <person name="Chiba Y."/>
            <person name="Ishida S."/>
            <person name="Ono Y."/>
            <person name="Takiguchi S."/>
            <person name="Watanabe S."/>
            <person name="Yosida M."/>
            <person name="Hotuta T."/>
            <person name="Kusano J."/>
            <person name="Kanehori K."/>
            <person name="Takahashi-Fujii A."/>
            <person name="Hara H."/>
            <person name="Tanase T.-O."/>
            <person name="Nomura Y."/>
            <person name="Togiya S."/>
            <person name="Komai F."/>
            <person name="Hara R."/>
            <person name="Takeuchi K."/>
            <person name="Arita M."/>
            <person name="Imose N."/>
            <person name="Musashino K."/>
            <person name="Yuuki H."/>
            <person name="Oshima A."/>
            <person name="Sasaki N."/>
            <person name="Aotsuka S."/>
            <person name="Yoshikawa Y."/>
            <person name="Matsunawa H."/>
            <person name="Ichihara T."/>
            <person name="Shiohata N."/>
            <person name="Sano S."/>
            <person name="Moriya S."/>
            <person name="Momiyama H."/>
            <person name="Satoh N."/>
            <person name="Takami S."/>
            <person name="Terashima Y."/>
            <person name="Suzuki O."/>
            <person name="Nakagawa S."/>
            <person name="Senoh A."/>
            <person name="Mizoguchi H."/>
            <person name="Goto Y."/>
            <person name="Shimizu F."/>
            <person name="Wakebe H."/>
            <person name="Hishigaki H."/>
            <person name="Watanabe T."/>
            <person name="Sugiyama A."/>
            <person name="Takemoto M."/>
            <person name="Kawakami B."/>
            <person name="Yamazaki M."/>
            <person name="Watanabe K."/>
            <person name="Kumagai A."/>
            <person name="Itakura S."/>
            <person name="Fukuzumi Y."/>
            <person name="Fujimori Y."/>
            <person name="Komiyama M."/>
            <person name="Tashiro H."/>
            <person name="Tanigami A."/>
            <person name="Fujiwara T."/>
            <person name="Ono T."/>
            <person name="Yamada K."/>
            <person name="Fujii Y."/>
            <person name="Ozaki K."/>
            <person name="Hirao M."/>
            <person name="Ohmori Y."/>
            <person name="Kawabata A."/>
            <person name="Hikiji T."/>
            <person name="Kobatake N."/>
            <person name="Inagaki H."/>
            <person name="Ikema Y."/>
            <person name="Okamoto S."/>
            <person name="Okitani R."/>
            <person name="Kawakami T."/>
            <person name="Noguchi S."/>
            <person name="Itoh T."/>
            <person name="Shigeta K."/>
            <person name="Senba T."/>
            <person name="Matsumura K."/>
            <person name="Nakajima Y."/>
            <person name="Mizuno T."/>
            <person name="Morinaga M."/>
            <person name="Sasaki M."/>
            <person name="Togashi T."/>
            <person name="Oyama M."/>
            <person name="Hata H."/>
            <person name="Watanabe M."/>
            <person name="Komatsu T."/>
            <person name="Mizushima-Sugano J."/>
            <person name="Satoh T."/>
            <person name="Shirai Y."/>
            <person name="Takahashi Y."/>
            <person name="Nakagawa K."/>
            <person name="Okumura K."/>
            <person name="Nagase T."/>
            <person name="Nomura N."/>
            <person name="Kikuchi H."/>
            <person name="Masuho Y."/>
            <person name="Yamashita R."/>
            <person name="Nakai K."/>
            <person name="Yada T."/>
            <person name="Nakamura Y."/>
            <person name="Ohara O."/>
            <person name="Isogai T."/>
            <person name="Sugano S."/>
        </authorList>
    </citation>
    <scope>NUCLEOTIDE SEQUENCE [LARGE SCALE MRNA] (ISOFORM 5)</scope>
</reference>
<reference key="4">
    <citation type="journal article" date="2006" name="Nature">
        <title>The DNA sequence, annotation and analysis of human chromosome 3.</title>
        <authorList>
            <person name="Muzny D.M."/>
            <person name="Scherer S.E."/>
            <person name="Kaul R."/>
            <person name="Wang J."/>
            <person name="Yu J."/>
            <person name="Sudbrak R."/>
            <person name="Buhay C.J."/>
            <person name="Chen R."/>
            <person name="Cree A."/>
            <person name="Ding Y."/>
            <person name="Dugan-Rocha S."/>
            <person name="Gill R."/>
            <person name="Gunaratne P."/>
            <person name="Harris R.A."/>
            <person name="Hawes A.C."/>
            <person name="Hernandez J."/>
            <person name="Hodgson A.V."/>
            <person name="Hume J."/>
            <person name="Jackson A."/>
            <person name="Khan Z.M."/>
            <person name="Kovar-Smith C."/>
            <person name="Lewis L.R."/>
            <person name="Lozado R.J."/>
            <person name="Metzker M.L."/>
            <person name="Milosavljevic A."/>
            <person name="Miner G.R."/>
            <person name="Morgan M.B."/>
            <person name="Nazareth L.V."/>
            <person name="Scott G."/>
            <person name="Sodergren E."/>
            <person name="Song X.-Z."/>
            <person name="Steffen D."/>
            <person name="Wei S."/>
            <person name="Wheeler D.A."/>
            <person name="Wright M.W."/>
            <person name="Worley K.C."/>
            <person name="Yuan Y."/>
            <person name="Zhang Z."/>
            <person name="Adams C.Q."/>
            <person name="Ansari-Lari M.A."/>
            <person name="Ayele M."/>
            <person name="Brown M.J."/>
            <person name="Chen G."/>
            <person name="Chen Z."/>
            <person name="Clendenning J."/>
            <person name="Clerc-Blankenburg K.P."/>
            <person name="Chen R."/>
            <person name="Chen Z."/>
            <person name="Davis C."/>
            <person name="Delgado O."/>
            <person name="Dinh H.H."/>
            <person name="Dong W."/>
            <person name="Draper H."/>
            <person name="Ernst S."/>
            <person name="Fu G."/>
            <person name="Gonzalez-Garay M.L."/>
            <person name="Garcia D.K."/>
            <person name="Gillett W."/>
            <person name="Gu J."/>
            <person name="Hao B."/>
            <person name="Haugen E."/>
            <person name="Havlak P."/>
            <person name="He X."/>
            <person name="Hennig S."/>
            <person name="Hu S."/>
            <person name="Huang W."/>
            <person name="Jackson L.R."/>
            <person name="Jacob L.S."/>
            <person name="Kelly S.H."/>
            <person name="Kube M."/>
            <person name="Levy R."/>
            <person name="Li Z."/>
            <person name="Liu B."/>
            <person name="Liu J."/>
            <person name="Liu W."/>
            <person name="Lu J."/>
            <person name="Maheshwari M."/>
            <person name="Nguyen B.-V."/>
            <person name="Okwuonu G.O."/>
            <person name="Palmeiri A."/>
            <person name="Pasternak S."/>
            <person name="Perez L.M."/>
            <person name="Phelps K.A."/>
            <person name="Plopper F.J."/>
            <person name="Qiang B."/>
            <person name="Raymond C."/>
            <person name="Rodriguez R."/>
            <person name="Saenphimmachak C."/>
            <person name="Santibanez J."/>
            <person name="Shen H."/>
            <person name="Shen Y."/>
            <person name="Subramanian S."/>
            <person name="Tabor P.E."/>
            <person name="Verduzco D."/>
            <person name="Waldron L."/>
            <person name="Wang J."/>
            <person name="Wang J."/>
            <person name="Wang Q."/>
            <person name="Williams G.A."/>
            <person name="Wong G.K.-S."/>
            <person name="Yao Z."/>
            <person name="Zhang J."/>
            <person name="Zhang X."/>
            <person name="Zhao G."/>
            <person name="Zhou J."/>
            <person name="Zhou Y."/>
            <person name="Nelson D."/>
            <person name="Lehrach H."/>
            <person name="Reinhardt R."/>
            <person name="Naylor S.L."/>
            <person name="Yang H."/>
            <person name="Olson M."/>
            <person name="Weinstock G."/>
            <person name="Gibbs R.A."/>
        </authorList>
    </citation>
    <scope>NUCLEOTIDE SEQUENCE [LARGE SCALE GENOMIC DNA]</scope>
</reference>
<reference key="5">
    <citation type="journal article" date="2004" name="Genome Res.">
        <title>The status, quality, and expansion of the NIH full-length cDNA project: the Mammalian Gene Collection (MGC).</title>
        <authorList>
            <consortium name="The MGC Project Team"/>
        </authorList>
    </citation>
    <scope>NUCLEOTIDE SEQUENCE [LARGE SCALE MRNA] (ISOFORM SNON)</scope>
    <scope>VARIANT VAL-38</scope>
    <source>
        <tissue>Placenta</tissue>
    </source>
</reference>
<reference key="6">
    <citation type="journal article" date="1993" name="Nucleic Acids Res.">
        <title>SnoI, a novel alternatively spliced isoform of the ski proto-oncogene homolog, sno.</title>
        <authorList>
            <person name="Pearson-White S."/>
        </authorList>
    </citation>
    <scope>NUCLEOTIDE SEQUENCE [MRNA] OF 13-684 (ISOFORM SNOI)</scope>
    <scope>TISSUE SPECIFICITY</scope>
    <source>
        <tissue>Myoblast</tissue>
    </source>
</reference>
<reference key="7">
    <citation type="journal article" date="2004" name="Oncogene">
        <title>Negative regulation of transforming growth factor-beta (TGF-beta) signaling by WW domain-containing protein 1 (WWP1).</title>
        <authorList>
            <person name="Komuro A."/>
            <person name="Imamura T."/>
            <person name="Saitoh M."/>
            <person name="Yoshida Y."/>
            <person name="Yamori T."/>
            <person name="Miyazono K."/>
            <person name="Miyazawa K."/>
        </authorList>
    </citation>
    <scope>INTERACTION WITH WWP1</scope>
</reference>
<reference key="8">
    <citation type="journal article" date="2007" name="Mol. Cell. Biol.">
        <title>Arkadia activates Smad3/Smad4-dependent transcription by triggering signal-induced SnoN degradation.</title>
        <authorList>
            <person name="Levy L."/>
            <person name="Howell M."/>
            <person name="Das D."/>
            <person name="Harkin S."/>
            <person name="Episkopou V."/>
            <person name="Hill C.S."/>
        </authorList>
    </citation>
    <scope>INTERACTION WITH RNF111</scope>
    <scope>UBIQUITINATION</scope>
</reference>
<reference key="9">
    <citation type="journal article" date="2013" name="J. Proteome Res.">
        <title>Toward a comprehensive characterization of a human cancer cell phosphoproteome.</title>
        <authorList>
            <person name="Zhou H."/>
            <person name="Di Palma S."/>
            <person name="Preisinger C."/>
            <person name="Peng M."/>
            <person name="Polat A.N."/>
            <person name="Heck A.J."/>
            <person name="Mohammed S."/>
        </authorList>
    </citation>
    <scope>PHOSPHORYLATION [LARGE SCALE ANALYSIS] AT SER-452</scope>
    <scope>IDENTIFICATION BY MASS SPECTROMETRY [LARGE SCALE ANALYSIS]</scope>
    <source>
        <tissue>Erythroleukemia</tissue>
    </source>
</reference>
<reference key="10">
    <citation type="journal article" date="2015" name="Mol. Cell. Proteomics">
        <title>System-wide analysis of SUMOylation dynamics in response to replication stress reveals novel small ubiquitin-like modified target proteins and acceptor lysines relevant for genome stability.</title>
        <authorList>
            <person name="Xiao Z."/>
            <person name="Chang J.G."/>
            <person name="Hendriks I.A."/>
            <person name="Sigurdsson J.O."/>
            <person name="Olsen J.V."/>
            <person name="Vertegaal A.C."/>
        </authorList>
    </citation>
    <scope>SUMOYLATION [LARGE SCALE ANALYSIS] AT LYS-50 AND LYS-527</scope>
    <scope>IDENTIFICATION BY MASS SPECTROMETRY [LARGE SCALE ANALYSIS]</scope>
</reference>
<reference key="11">
    <citation type="journal article" date="2017" name="Nat. Struct. Mol. Biol.">
        <title>Site-specific mapping of the human SUMO proteome reveals co-modification with phosphorylation.</title>
        <authorList>
            <person name="Hendriks I.A."/>
            <person name="Lyon D."/>
            <person name="Young C."/>
            <person name="Jensen L.J."/>
            <person name="Vertegaal A.C."/>
            <person name="Nielsen M.L."/>
        </authorList>
    </citation>
    <scope>SUMOYLATION [LARGE SCALE ANALYSIS] AT LYS-70; LYS-489 AND LYS-527</scope>
    <scope>IDENTIFICATION BY MASS SPECTROMETRY [LARGE SCALE ANALYSIS]</scope>
</reference>
<feature type="chain" id="PRO_0000129387" description="Ski-like protein">
    <location>
        <begin position="1"/>
        <end position="684"/>
    </location>
</feature>
<feature type="region of interest" description="Disordered" evidence="3">
    <location>
        <begin position="420"/>
        <end position="454"/>
    </location>
</feature>
<feature type="coiled-coil region" evidence="2">
    <location>
        <begin position="536"/>
        <end position="684"/>
    </location>
</feature>
<feature type="modified residue" description="Phosphoserine" evidence="15">
    <location>
        <position position="452"/>
    </location>
</feature>
<feature type="cross-link" description="Glycyl lysine isopeptide (Lys-Gly) (interchain with G-Cter in SUMO2)" evidence="16">
    <location>
        <position position="50"/>
    </location>
</feature>
<feature type="cross-link" description="Glycyl lysine isopeptide (Lys-Gly) (interchain with G-Cter in SUMO2)" evidence="17">
    <location>
        <position position="70"/>
    </location>
</feature>
<feature type="cross-link" description="Glycyl lysine isopeptide (Lys-Gly) (interchain with G-Cter in SUMO2)" evidence="17">
    <location>
        <position position="489"/>
    </location>
</feature>
<feature type="cross-link" description="Glycyl lysine isopeptide (Lys-Gly) (interchain with G-Cter in SUMO2)" evidence="16 17">
    <location>
        <position position="527"/>
    </location>
</feature>
<feature type="splice variant" id="VSP_040099" description="In isoform 5." evidence="10">
    <location>
        <begin position="1"/>
        <end position="20"/>
    </location>
</feature>
<feature type="splice variant" id="VSP_004392" description="In isoform SNOA." evidence="11">
    <original>TDAPSGMELQSWYPVIKQEGDHVSQTHSFLHPSYYLYMCDKVVAPNVSL</original>
    <variation>ASFLYQFLIMVMVYFEMKILCLVCNLTCMLNIAHATTTKYRLIYLYCSF</variation>
    <location>
        <begin position="367"/>
        <end position="415"/>
    </location>
</feature>
<feature type="splice variant" id="VSP_004393" description="In isoform SNOI." evidence="12">
    <location>
        <begin position="400"/>
        <end position="684"/>
    </location>
</feature>
<feature type="splice variant" id="VSP_004394" description="In isoform SNOA." evidence="11">
    <location>
        <begin position="416"/>
        <end position="684"/>
    </location>
</feature>
<feature type="splice variant" id="VSP_004395" description="In isoform SNON2." evidence="13">
    <original>S</original>
    <variation>N</variation>
    <location>
        <position position="431"/>
    </location>
</feature>
<feature type="splice variant" id="VSP_004396" description="In isoform SNON2." evidence="13">
    <location>
        <begin position="432"/>
        <end position="477"/>
    </location>
</feature>
<feature type="sequence variant" id="VAR_011677" description="In dbSNP:rs3772173." evidence="5 7 9">
    <original>A</original>
    <variation>V</variation>
    <location>
        <position position="38"/>
    </location>
</feature>
<feature type="sequence conflict" description="In Ref. 6; CAA79636." evidence="14" ref="6">
    <original>G</original>
    <variation>R</variation>
    <location>
        <position position="13"/>
    </location>
</feature>
<feature type="helix" evidence="18">
    <location>
        <begin position="137"/>
        <end position="139"/>
    </location>
</feature>
<feature type="strand" evidence="18">
    <location>
        <begin position="145"/>
        <end position="149"/>
    </location>
</feature>
<feature type="strand" evidence="18">
    <location>
        <begin position="152"/>
        <end position="159"/>
    </location>
</feature>
<feature type="strand" evidence="18">
    <location>
        <begin position="162"/>
        <end position="166"/>
    </location>
</feature>
<feature type="helix" evidence="18">
    <location>
        <begin position="167"/>
        <end position="172"/>
    </location>
</feature>
<feature type="turn" evidence="18">
    <location>
        <begin position="173"/>
        <end position="177"/>
    </location>
</feature>
<feature type="helix" evidence="18">
    <location>
        <begin position="180"/>
        <end position="190"/>
    </location>
</feature>
<feature type="helix" evidence="18">
    <location>
        <begin position="199"/>
        <end position="207"/>
    </location>
</feature>
<feature type="strand" evidence="18">
    <location>
        <begin position="219"/>
        <end position="222"/>
    </location>
</feature>
<feature type="helix" evidence="18">
    <location>
        <begin position="223"/>
        <end position="234"/>
    </location>
</feature>
<feature type="strand" evidence="19">
    <location>
        <begin position="262"/>
        <end position="266"/>
    </location>
</feature>
<feature type="strand" evidence="19">
    <location>
        <begin position="272"/>
        <end position="276"/>
    </location>
</feature>
<feature type="helix" evidence="19">
    <location>
        <begin position="278"/>
        <end position="280"/>
    </location>
</feature>
<feature type="strand" evidence="19">
    <location>
        <begin position="289"/>
        <end position="291"/>
    </location>
</feature>
<feature type="turn" evidence="19">
    <location>
        <begin position="292"/>
        <end position="294"/>
    </location>
</feature>
<feature type="helix" evidence="19">
    <location>
        <begin position="300"/>
        <end position="303"/>
    </location>
</feature>
<feature type="strand" evidence="19">
    <location>
        <begin position="313"/>
        <end position="319"/>
    </location>
</feature>
<feature type="helix" evidence="19">
    <location>
        <begin position="322"/>
        <end position="324"/>
    </location>
</feature>
<feature type="helix" evidence="19">
    <location>
        <begin position="325"/>
        <end position="328"/>
    </location>
</feature>
<feature type="strand" evidence="19">
    <location>
        <begin position="335"/>
        <end position="338"/>
    </location>
</feature>
<feature type="helix" evidence="19">
    <location>
        <begin position="341"/>
        <end position="352"/>
    </location>
</feature>
<evidence type="ECO:0000250" key="1">
    <source>
        <dbReference type="UniProtKB" id="Q60665"/>
    </source>
</evidence>
<evidence type="ECO:0000255" key="2"/>
<evidence type="ECO:0000256" key="3">
    <source>
        <dbReference type="SAM" id="MobiDB-lite"/>
    </source>
</evidence>
<evidence type="ECO:0000269" key="4">
    <source>
    </source>
</evidence>
<evidence type="ECO:0000269" key="5">
    <source>
    </source>
</evidence>
<evidence type="ECO:0000269" key="6">
    <source>
    </source>
</evidence>
<evidence type="ECO:0000269" key="7">
    <source>
    </source>
</evidence>
<evidence type="ECO:0000269" key="8">
    <source>
    </source>
</evidence>
<evidence type="ECO:0000269" key="9">
    <source>
    </source>
</evidence>
<evidence type="ECO:0000303" key="10">
    <source>
    </source>
</evidence>
<evidence type="ECO:0000303" key="11">
    <source>
    </source>
</evidence>
<evidence type="ECO:0000303" key="12">
    <source>
    </source>
</evidence>
<evidence type="ECO:0000303" key="13">
    <source>
    </source>
</evidence>
<evidence type="ECO:0000305" key="14"/>
<evidence type="ECO:0007744" key="15">
    <source>
    </source>
</evidence>
<evidence type="ECO:0007744" key="16">
    <source>
    </source>
</evidence>
<evidence type="ECO:0007744" key="17">
    <source>
    </source>
</evidence>
<evidence type="ECO:0007829" key="18">
    <source>
        <dbReference type="PDB" id="3EQ5"/>
    </source>
</evidence>
<evidence type="ECO:0007829" key="19">
    <source>
        <dbReference type="PDB" id="5C4V"/>
    </source>
</evidence>
<keyword id="KW-0002">3D-structure</keyword>
<keyword id="KW-0025">Alternative splicing</keyword>
<keyword id="KW-0175">Coiled coil</keyword>
<keyword id="KW-1017">Isopeptide bond</keyword>
<keyword id="KW-0597">Phosphoprotein</keyword>
<keyword id="KW-1267">Proteomics identification</keyword>
<keyword id="KW-1185">Reference proteome</keyword>
<keyword id="KW-0832">Ubl conjugation</keyword>